<dbReference type="EMBL" id="M13986">
    <property type="protein sequence ID" value="AAA51639.1"/>
    <property type="molecule type" value="Genomic_DNA"/>
</dbReference>
<dbReference type="EMBL" id="K03509">
    <property type="protein sequence ID" value="AAA51639.1"/>
    <property type="status" value="JOINED"/>
    <property type="molecule type" value="mRNA"/>
</dbReference>
<dbReference type="PIR" id="A25942">
    <property type="entry name" value="A25942"/>
</dbReference>
<dbReference type="BindingDB" id="P05227"/>
<dbReference type="ChEMBL" id="CHEMBL1923"/>
<dbReference type="DrugCentral" id="P05227"/>
<dbReference type="ABCD" id="P05227">
    <property type="antibodies" value="1 sequenced antibody"/>
</dbReference>
<dbReference type="VEuPathDB" id="PlasmoDB:Pf7G8-2_000246700"/>
<dbReference type="InterPro" id="IPR008779">
    <property type="entry name" value="Plasmodium_HRP"/>
</dbReference>
<dbReference type="Pfam" id="PF05403">
    <property type="entry name" value="Plasmodium_HRP"/>
    <property type="match status" value="3"/>
</dbReference>
<sequence length="332" mass="35129">MVSFSKNKVLSAAVFASVLLLDNNNSAFNNNLCSKNAKGLNLNKRLLHETQAHVDDAHHAHHVADAHHAHHAHHAADAHHAHHAADAHHAHHAADAHHAHHAADAHHAHHAADAHHAHHAADAHHAHHAADAHHAHHAADAHHAHHAADAHHAHHAAYAHHAHHASDAHHAADAHHAAYAHHAHHAADAHHAADAHHAAYAHHAHHAADAHHAADAHHATDAHHAHHAADAHHATDAHHAADAHHAADAHHATDAHHAADAHHATDAHHAADAHHAADAHHATDSHHAHHAADAHHAAAHHATDAHHAAAHHATDAHHAAAHHEAATHCLRH</sequence>
<name>HRP1_PLAFA</name>
<evidence type="ECO:0000255" key="1"/>
<evidence type="ECO:0000256" key="2">
    <source>
        <dbReference type="SAM" id="MobiDB-lite"/>
    </source>
</evidence>
<keyword id="KW-0461">Malaria</keyword>
<keyword id="KW-0677">Repeat</keyword>
<keyword id="KW-0732">Signal</keyword>
<reference key="1">
    <citation type="journal article" date="1986" name="Proc. Natl. Acad. Sci. U.S.A.">
        <title>Homologous genes encode two distinct histidine-rich proteins in a cloned isolate of Plasmodium falciparum.</title>
        <authorList>
            <person name="Wellems T.E."/>
            <person name="Howard R.J."/>
        </authorList>
    </citation>
    <scope>NUCLEOTIDE SEQUENCE [GENOMIC DNA / MRNA]</scope>
</reference>
<protein>
    <recommendedName>
        <fullName>Histidine-rich protein PFHRP-II</fullName>
    </recommendedName>
</protein>
<accession>P05227</accession>
<organism>
    <name type="scientific">Plasmodium falciparum</name>
    <dbReference type="NCBI Taxonomy" id="5833"/>
    <lineage>
        <taxon>Eukaryota</taxon>
        <taxon>Sar</taxon>
        <taxon>Alveolata</taxon>
        <taxon>Apicomplexa</taxon>
        <taxon>Aconoidasida</taxon>
        <taxon>Haemosporida</taxon>
        <taxon>Plasmodiidae</taxon>
        <taxon>Plasmodium</taxon>
        <taxon>Plasmodium (Laverania)</taxon>
    </lineage>
</organism>
<feature type="signal peptide" evidence="1">
    <location>
        <begin position="1"/>
        <end position="21"/>
    </location>
</feature>
<feature type="chain" id="PRO_0000024540" description="Histidine-rich protein PFHRP-II">
    <location>
        <begin position="22"/>
        <end position="332"/>
    </location>
</feature>
<feature type="region of interest" description="Disordered" evidence="2">
    <location>
        <begin position="62"/>
        <end position="332"/>
    </location>
</feature>
<feature type="compositionally biased region" description="Basic and acidic residues" evidence="2">
    <location>
        <begin position="74"/>
        <end position="151"/>
    </location>
</feature>
<feature type="compositionally biased region" description="Basic residues" evidence="2">
    <location>
        <begin position="152"/>
        <end position="163"/>
    </location>
</feature>
<feature type="compositionally biased region" description="Basic and acidic residues" evidence="2">
    <location>
        <begin position="164"/>
        <end position="176"/>
    </location>
</feature>
<feature type="compositionally biased region" description="Basic and acidic residues" evidence="2">
    <location>
        <begin position="185"/>
        <end position="197"/>
    </location>
</feature>
<feature type="compositionally biased region" description="Basic and acidic residues" evidence="2">
    <location>
        <begin position="206"/>
        <end position="326"/>
    </location>
</feature>
<proteinExistence type="evidence at transcript level"/>